<comment type="subcellular location">
    <subcellularLocation>
        <location>Plastid</location>
        <location>Cyanelle</location>
    </subcellularLocation>
</comment>
<comment type="similarity">
    <text evidence="2">Belongs to the universal ribosomal protein uS9 family.</text>
</comment>
<gene>
    <name type="primary">rps9</name>
</gene>
<proteinExistence type="inferred from homology"/>
<reference key="1">
    <citation type="journal article" date="1995" name="Plant Mol. Biol. Rep.">
        <title>Nucleotide sequence of the cyanelle DNA from Cyanophora paradoxa.</title>
        <authorList>
            <person name="Stirewalt V.L."/>
            <person name="Michalowski C.B."/>
            <person name="Loeffelhardt W."/>
            <person name="Bohnert H.J."/>
            <person name="Bryant D.A."/>
        </authorList>
    </citation>
    <scope>NUCLEOTIDE SEQUENCE [LARGE SCALE GENOMIC DNA]</scope>
    <source>
        <strain>UTEX LB 555 / Pringsheim</strain>
    </source>
</reference>
<reference key="2">
    <citation type="book" date="1997" name="Eukaryotism and symbiosis">
        <title>The complete sequence of the cyanelle genome of Cyanophora paradoxa: the genetic complexity of a primitive plastid.</title>
        <editorList>
            <person name="Schenk H.E.A."/>
            <person name="Herrmann R."/>
            <person name="Jeon K.W."/>
            <person name="Mueller N.E."/>
            <person name="Schwemmler W."/>
        </editorList>
        <authorList>
            <person name="Loeffelhardt W."/>
            <person name="Stirewalt V.L."/>
            <person name="Michalowski C.B."/>
            <person name="Annarella M."/>
            <person name="Farley J.Y."/>
            <person name="Schluchter W.M."/>
            <person name="Chung S."/>
            <person name="Newmann-Spallart C."/>
            <person name="Steiner J.M."/>
            <person name="Jakowitsch J."/>
            <person name="Bohnert H.J."/>
            <person name="Bryant D.A."/>
        </authorList>
    </citation>
    <scope>NUCLEOTIDE SEQUENCE [LARGE SCALE GENOMIC DNA]</scope>
    <source>
        <strain>UTEX LB 555 / Pringsheim</strain>
    </source>
</reference>
<feature type="chain" id="PRO_0000111448" description="Small ribosomal subunit protein uS9c">
    <location>
        <begin position="1"/>
        <end position="134"/>
    </location>
</feature>
<feature type="region of interest" description="Disordered" evidence="1">
    <location>
        <begin position="105"/>
        <end position="134"/>
    </location>
</feature>
<feature type="compositionally biased region" description="Basic and acidic residues" evidence="1">
    <location>
        <begin position="105"/>
        <end position="114"/>
    </location>
</feature>
<feature type="compositionally biased region" description="Basic residues" evidence="1">
    <location>
        <begin position="115"/>
        <end position="134"/>
    </location>
</feature>
<sequence>MGQKEQTLAYGTGRRKTSVAKVRLIPGKGEILINSKPANLYLQYNLSYLAAVKSPLESLGLANEYNVIVNTQGGGLTGQSEAIRLGLARALCQISLTHRPLLKSDHHLTRDARAKERKKYGLHKARKAPQYSKR</sequence>
<organism>
    <name type="scientific">Cyanophora paradoxa</name>
    <dbReference type="NCBI Taxonomy" id="2762"/>
    <lineage>
        <taxon>Eukaryota</taxon>
        <taxon>Glaucocystophyceae</taxon>
        <taxon>Cyanophoraceae</taxon>
        <taxon>Cyanophora</taxon>
    </lineage>
</organism>
<evidence type="ECO:0000256" key="1">
    <source>
        <dbReference type="SAM" id="MobiDB-lite"/>
    </source>
</evidence>
<evidence type="ECO:0000305" key="2"/>
<geneLocation type="cyanelle"/>
<keyword id="KW-0194">Cyanelle</keyword>
<keyword id="KW-0934">Plastid</keyword>
<keyword id="KW-0687">Ribonucleoprotein</keyword>
<keyword id="KW-0689">Ribosomal protein</keyword>
<name>RR9_CYAPA</name>
<dbReference type="EMBL" id="U30821">
    <property type="protein sequence ID" value="AAA81286.1"/>
    <property type="molecule type" value="Genomic_DNA"/>
</dbReference>
<dbReference type="PIR" id="T06943">
    <property type="entry name" value="T06943"/>
</dbReference>
<dbReference type="RefSeq" id="NP_043255.1">
    <property type="nucleotide sequence ID" value="NC_001675.1"/>
</dbReference>
<dbReference type="SMR" id="P48135"/>
<dbReference type="GeneID" id="801646"/>
<dbReference type="GO" id="GO:0009842">
    <property type="term" value="C:cyanelle"/>
    <property type="evidence" value="ECO:0007669"/>
    <property type="project" value="UniProtKB-SubCell"/>
</dbReference>
<dbReference type="GO" id="GO:0022627">
    <property type="term" value="C:cytosolic small ribosomal subunit"/>
    <property type="evidence" value="ECO:0007669"/>
    <property type="project" value="TreeGrafter"/>
</dbReference>
<dbReference type="GO" id="GO:0003723">
    <property type="term" value="F:RNA binding"/>
    <property type="evidence" value="ECO:0007669"/>
    <property type="project" value="TreeGrafter"/>
</dbReference>
<dbReference type="GO" id="GO:0003735">
    <property type="term" value="F:structural constituent of ribosome"/>
    <property type="evidence" value="ECO:0007669"/>
    <property type="project" value="InterPro"/>
</dbReference>
<dbReference type="GO" id="GO:0006412">
    <property type="term" value="P:translation"/>
    <property type="evidence" value="ECO:0007669"/>
    <property type="project" value="InterPro"/>
</dbReference>
<dbReference type="FunFam" id="3.30.230.10:FF:000001">
    <property type="entry name" value="30S ribosomal protein S9"/>
    <property type="match status" value="1"/>
</dbReference>
<dbReference type="Gene3D" id="3.30.230.10">
    <property type="match status" value="1"/>
</dbReference>
<dbReference type="HAMAP" id="MF_00532_B">
    <property type="entry name" value="Ribosomal_uS9_B"/>
    <property type="match status" value="1"/>
</dbReference>
<dbReference type="InterPro" id="IPR020568">
    <property type="entry name" value="Ribosomal_Su5_D2-typ_SF"/>
</dbReference>
<dbReference type="InterPro" id="IPR000754">
    <property type="entry name" value="Ribosomal_uS9"/>
</dbReference>
<dbReference type="InterPro" id="IPR023035">
    <property type="entry name" value="Ribosomal_uS9_bac/plastid"/>
</dbReference>
<dbReference type="InterPro" id="IPR020574">
    <property type="entry name" value="Ribosomal_uS9_CS"/>
</dbReference>
<dbReference type="InterPro" id="IPR014721">
    <property type="entry name" value="Ribsml_uS5_D2-typ_fold_subgr"/>
</dbReference>
<dbReference type="NCBIfam" id="NF001099">
    <property type="entry name" value="PRK00132.1"/>
    <property type="match status" value="1"/>
</dbReference>
<dbReference type="PANTHER" id="PTHR21569">
    <property type="entry name" value="RIBOSOMAL PROTEIN S9"/>
    <property type="match status" value="1"/>
</dbReference>
<dbReference type="PANTHER" id="PTHR21569:SF1">
    <property type="entry name" value="SMALL RIBOSOMAL SUBUNIT PROTEIN US9M"/>
    <property type="match status" value="1"/>
</dbReference>
<dbReference type="Pfam" id="PF00380">
    <property type="entry name" value="Ribosomal_S9"/>
    <property type="match status" value="1"/>
</dbReference>
<dbReference type="SUPFAM" id="SSF54211">
    <property type="entry name" value="Ribosomal protein S5 domain 2-like"/>
    <property type="match status" value="1"/>
</dbReference>
<dbReference type="PROSITE" id="PS00360">
    <property type="entry name" value="RIBOSOMAL_S9"/>
    <property type="match status" value="1"/>
</dbReference>
<accession>P48135</accession>
<protein>
    <recommendedName>
        <fullName evidence="2">Small ribosomal subunit protein uS9c</fullName>
    </recommendedName>
    <alternativeName>
        <fullName>30S ribosomal protein S9, cyanelle</fullName>
    </alternativeName>
</protein>